<comment type="function">
    <text evidence="1">Synthesizes alpha-1,4-glucan chains using ADP-glucose.</text>
</comment>
<comment type="catalytic activity">
    <reaction evidence="1">
        <text>[(1-&gt;4)-alpha-D-glucosyl](n) + ADP-alpha-D-glucose = [(1-&gt;4)-alpha-D-glucosyl](n+1) + ADP + H(+)</text>
        <dbReference type="Rhea" id="RHEA:18189"/>
        <dbReference type="Rhea" id="RHEA-COMP:9584"/>
        <dbReference type="Rhea" id="RHEA-COMP:9587"/>
        <dbReference type="ChEBI" id="CHEBI:15378"/>
        <dbReference type="ChEBI" id="CHEBI:15444"/>
        <dbReference type="ChEBI" id="CHEBI:57498"/>
        <dbReference type="ChEBI" id="CHEBI:456216"/>
        <dbReference type="EC" id="2.4.1.21"/>
    </reaction>
</comment>
<comment type="pathway">
    <text evidence="1">Glycan biosynthesis; glycogen biosynthesis.</text>
</comment>
<comment type="similarity">
    <text evidence="1">Belongs to the glycosyltransferase 1 family. Bacterial/plant glycogen synthase subfamily.</text>
</comment>
<proteinExistence type="inferred from homology"/>
<dbReference type="EC" id="2.4.1.21" evidence="1"/>
<dbReference type="EMBL" id="CP000612">
    <property type="protein sequence ID" value="ABO49987.1"/>
    <property type="molecule type" value="Genomic_DNA"/>
</dbReference>
<dbReference type="RefSeq" id="WP_011877803.1">
    <property type="nucleotide sequence ID" value="NC_009253.1"/>
</dbReference>
<dbReference type="SMR" id="A4J4I4"/>
<dbReference type="STRING" id="349161.Dred_1457"/>
<dbReference type="CAZy" id="GT5">
    <property type="family name" value="Glycosyltransferase Family 5"/>
</dbReference>
<dbReference type="KEGG" id="drm:Dred_1457"/>
<dbReference type="eggNOG" id="COG0297">
    <property type="taxonomic scope" value="Bacteria"/>
</dbReference>
<dbReference type="HOGENOM" id="CLU_009583_18_2_9"/>
<dbReference type="OrthoDB" id="9808590at2"/>
<dbReference type="UniPathway" id="UPA00164"/>
<dbReference type="Proteomes" id="UP000001556">
    <property type="component" value="Chromosome"/>
</dbReference>
<dbReference type="GO" id="GO:0009011">
    <property type="term" value="F:alpha-1,4-glucan glucosyltransferase (ADP-glucose donor) activity"/>
    <property type="evidence" value="ECO:0007669"/>
    <property type="project" value="UniProtKB-UniRule"/>
</dbReference>
<dbReference type="GO" id="GO:0004373">
    <property type="term" value="F:alpha-1,4-glucan glucosyltransferase (UDP-glucose donor) activity"/>
    <property type="evidence" value="ECO:0007669"/>
    <property type="project" value="InterPro"/>
</dbReference>
<dbReference type="GO" id="GO:0005978">
    <property type="term" value="P:glycogen biosynthetic process"/>
    <property type="evidence" value="ECO:0007669"/>
    <property type="project" value="UniProtKB-UniRule"/>
</dbReference>
<dbReference type="CDD" id="cd03791">
    <property type="entry name" value="GT5_Glycogen_synthase_DULL1-like"/>
    <property type="match status" value="1"/>
</dbReference>
<dbReference type="Gene3D" id="3.40.50.2000">
    <property type="entry name" value="Glycogen Phosphorylase B"/>
    <property type="match status" value="2"/>
</dbReference>
<dbReference type="HAMAP" id="MF_00484">
    <property type="entry name" value="Glycogen_synth"/>
    <property type="match status" value="1"/>
</dbReference>
<dbReference type="InterPro" id="IPR001296">
    <property type="entry name" value="Glyco_trans_1"/>
</dbReference>
<dbReference type="InterPro" id="IPR011835">
    <property type="entry name" value="GS/SS"/>
</dbReference>
<dbReference type="InterPro" id="IPR013534">
    <property type="entry name" value="Starch_synth_cat_dom"/>
</dbReference>
<dbReference type="NCBIfam" id="TIGR02095">
    <property type="entry name" value="glgA"/>
    <property type="match status" value="1"/>
</dbReference>
<dbReference type="NCBIfam" id="NF001898">
    <property type="entry name" value="PRK00654.1-1"/>
    <property type="match status" value="1"/>
</dbReference>
<dbReference type="NCBIfam" id="NF001899">
    <property type="entry name" value="PRK00654.1-2"/>
    <property type="match status" value="1"/>
</dbReference>
<dbReference type="PANTHER" id="PTHR45825:SF11">
    <property type="entry name" value="ALPHA AMYLASE DOMAIN-CONTAINING PROTEIN"/>
    <property type="match status" value="1"/>
</dbReference>
<dbReference type="PANTHER" id="PTHR45825">
    <property type="entry name" value="GRANULE-BOUND STARCH SYNTHASE 1, CHLOROPLASTIC/AMYLOPLASTIC"/>
    <property type="match status" value="1"/>
</dbReference>
<dbReference type="Pfam" id="PF08323">
    <property type="entry name" value="Glyco_transf_5"/>
    <property type="match status" value="1"/>
</dbReference>
<dbReference type="Pfam" id="PF00534">
    <property type="entry name" value="Glycos_transf_1"/>
    <property type="match status" value="1"/>
</dbReference>
<dbReference type="SUPFAM" id="SSF53756">
    <property type="entry name" value="UDP-Glycosyltransferase/glycogen phosphorylase"/>
    <property type="match status" value="1"/>
</dbReference>
<keyword id="KW-0320">Glycogen biosynthesis</keyword>
<keyword id="KW-0328">Glycosyltransferase</keyword>
<keyword id="KW-1185">Reference proteome</keyword>
<keyword id="KW-0808">Transferase</keyword>
<accession>A4J4I4</accession>
<gene>
    <name evidence="1" type="primary">glgA</name>
    <name type="ordered locus">Dred_1457</name>
</gene>
<name>GLGA_DESRM</name>
<reference key="1">
    <citation type="submission" date="2007-03" db="EMBL/GenBank/DDBJ databases">
        <title>Complete sequence of Desulfotomaculum reducens MI-1.</title>
        <authorList>
            <consortium name="US DOE Joint Genome Institute"/>
            <person name="Copeland A."/>
            <person name="Lucas S."/>
            <person name="Lapidus A."/>
            <person name="Barry K."/>
            <person name="Detter J.C."/>
            <person name="Glavina del Rio T."/>
            <person name="Hammon N."/>
            <person name="Israni S."/>
            <person name="Dalin E."/>
            <person name="Tice H."/>
            <person name="Pitluck S."/>
            <person name="Sims D."/>
            <person name="Brettin T."/>
            <person name="Bruce D."/>
            <person name="Han C."/>
            <person name="Tapia R."/>
            <person name="Schmutz J."/>
            <person name="Larimer F."/>
            <person name="Land M."/>
            <person name="Hauser L."/>
            <person name="Kyrpides N."/>
            <person name="Kim E."/>
            <person name="Tebo B.M."/>
            <person name="Richardson P."/>
        </authorList>
    </citation>
    <scope>NUCLEOTIDE SEQUENCE [LARGE SCALE GENOMIC DNA]</scope>
    <source>
        <strain>ATCC BAA-1160 / DSM 100696 / MI-1</strain>
    </source>
</reference>
<feature type="chain" id="PRO_1000072414" description="Glycogen synthase">
    <location>
        <begin position="1"/>
        <end position="480"/>
    </location>
</feature>
<feature type="binding site" evidence="1">
    <location>
        <position position="15"/>
    </location>
    <ligand>
        <name>ADP-alpha-D-glucose</name>
        <dbReference type="ChEBI" id="CHEBI:57498"/>
    </ligand>
</feature>
<evidence type="ECO:0000255" key="1">
    <source>
        <dbReference type="HAMAP-Rule" id="MF_00484"/>
    </source>
</evidence>
<organism>
    <name type="scientific">Desulforamulus reducens (strain ATCC BAA-1160 / DSM 100696 / MI-1)</name>
    <name type="common">Desulfotomaculum reducens</name>
    <dbReference type="NCBI Taxonomy" id="349161"/>
    <lineage>
        <taxon>Bacteria</taxon>
        <taxon>Bacillati</taxon>
        <taxon>Bacillota</taxon>
        <taxon>Clostridia</taxon>
        <taxon>Eubacteriales</taxon>
        <taxon>Peptococcaceae</taxon>
        <taxon>Desulforamulus</taxon>
    </lineage>
</organism>
<sequence length="480" mass="55379">MKVLFAASEGVPFVKTGGLADVIGSLPRHLKSQGFDVRVILPKYSDIPICFREQMLKLTDFMVPLGWRNLYCGIEKLKYDGIIFYFIDNEFYFKRQGLYGFEDDAERFAFFDRAILEVLPRIDFQPNIIHCHDWHTGMISTFLKSHYRNNPFYQDIRTVFTIHNLQYQGVFPRTILQNVLGLGNEYFGLDGLEFYGQVSFMKGGVNYSDILTTVSETYAEEIQLPQYGEQLDGLLRHQKRKLHGILNGIDIDIYNPDTDPHICVNFSRETVDKKHINKESLQKILCLPMRPDVPVFGMVSRLVSQKGLELIGSVLDDILALDVQLVVLGSGEKHYEDMFRSASRRYPDKVSVNIMFGNTLAHRIYAGSDIYLMPSAFEPCGLSQMIALRYGSIPIVRETGGLRDTIQPYNEYTGEGNGFSFTHFNAQDFLYTLKRTISFYRQRNIWSIIVSNAMQCDFSWYKSAQKYQDLYKKLLFNGDR</sequence>
<protein>
    <recommendedName>
        <fullName evidence="1">Glycogen synthase</fullName>
        <ecNumber evidence="1">2.4.1.21</ecNumber>
    </recommendedName>
    <alternativeName>
        <fullName evidence="1">Starch [bacterial glycogen] synthase</fullName>
    </alternativeName>
</protein>